<dbReference type="EMBL" id="CH474033">
    <property type="protein sequence ID" value="EDL99815.1"/>
    <property type="molecule type" value="Genomic_DNA"/>
</dbReference>
<dbReference type="EMBL" id="M80601">
    <property type="protein sequence ID" value="AAA42067.1"/>
    <property type="molecule type" value="mRNA"/>
</dbReference>
<dbReference type="PIR" id="A41257">
    <property type="entry name" value="A41257"/>
</dbReference>
<dbReference type="RefSeq" id="NP_113826.1">
    <property type="nucleotide sequence ID" value="NM_031638.1"/>
</dbReference>
<dbReference type="FunCoup" id="P47816">
    <property type="interactions" value="3516"/>
</dbReference>
<dbReference type="STRING" id="10116.ENSRNOP00000002040"/>
<dbReference type="PhosphoSitePlus" id="P47816"/>
<dbReference type="jPOST" id="P47816"/>
<dbReference type="PaxDb" id="10116-ENSRNOP00000002040"/>
<dbReference type="Ensembl" id="ENSRNOT00000002040.5">
    <property type="protein sequence ID" value="ENSRNOP00000002040.4"/>
    <property type="gene ID" value="ENSRNOG00000001490.5"/>
</dbReference>
<dbReference type="GeneID" id="58934"/>
<dbReference type="KEGG" id="rno:58934"/>
<dbReference type="AGR" id="RGD:61887"/>
<dbReference type="CTD" id="5134"/>
<dbReference type="RGD" id="61887">
    <property type="gene designation" value="Pdcd2"/>
</dbReference>
<dbReference type="eggNOG" id="KOG2061">
    <property type="taxonomic scope" value="Eukaryota"/>
</dbReference>
<dbReference type="GeneTree" id="ENSGT00940000156603"/>
<dbReference type="HOGENOM" id="CLU_034893_2_0_1"/>
<dbReference type="InParanoid" id="P47816"/>
<dbReference type="OMA" id="HQVIRYS"/>
<dbReference type="OrthoDB" id="426438at2759"/>
<dbReference type="TreeFam" id="TF313722"/>
<dbReference type="PRO" id="PR:P47816"/>
<dbReference type="Proteomes" id="UP000002494">
    <property type="component" value="Chromosome 1"/>
</dbReference>
<dbReference type="Proteomes" id="UP000234681">
    <property type="component" value="Chromosome 1"/>
</dbReference>
<dbReference type="Bgee" id="ENSRNOG00000001490">
    <property type="expression patterns" value="Expressed in thymus and 20 other cell types or tissues"/>
</dbReference>
<dbReference type="GO" id="GO:0005737">
    <property type="term" value="C:cytoplasm"/>
    <property type="evidence" value="ECO:0007669"/>
    <property type="project" value="InterPro"/>
</dbReference>
<dbReference type="GO" id="GO:0005634">
    <property type="term" value="C:nucleus"/>
    <property type="evidence" value="ECO:0000318"/>
    <property type="project" value="GO_Central"/>
</dbReference>
<dbReference type="GO" id="GO:0003677">
    <property type="term" value="F:DNA binding"/>
    <property type="evidence" value="ECO:0007669"/>
    <property type="project" value="UniProtKB-KW"/>
</dbReference>
<dbReference type="GO" id="GO:0019899">
    <property type="term" value="F:enzyme binding"/>
    <property type="evidence" value="ECO:0000266"/>
    <property type="project" value="RGD"/>
</dbReference>
<dbReference type="GO" id="GO:0008270">
    <property type="term" value="F:zinc ion binding"/>
    <property type="evidence" value="ECO:0007669"/>
    <property type="project" value="UniProtKB-KW"/>
</dbReference>
<dbReference type="GO" id="GO:0006915">
    <property type="term" value="P:apoptotic process"/>
    <property type="evidence" value="ECO:0007669"/>
    <property type="project" value="UniProtKB-KW"/>
</dbReference>
<dbReference type="GO" id="GO:0043065">
    <property type="term" value="P:positive regulation of apoptotic process"/>
    <property type="evidence" value="ECO:0000266"/>
    <property type="project" value="RGD"/>
</dbReference>
<dbReference type="GO" id="GO:1902035">
    <property type="term" value="P:positive regulation of hematopoietic stem cell proliferation"/>
    <property type="evidence" value="ECO:0000266"/>
    <property type="project" value="RGD"/>
</dbReference>
<dbReference type="GO" id="GO:0012501">
    <property type="term" value="P:programmed cell death"/>
    <property type="evidence" value="ECO:0000270"/>
    <property type="project" value="RGD"/>
</dbReference>
<dbReference type="GO" id="GO:1901532">
    <property type="term" value="P:regulation of hematopoietic progenitor cell differentiation"/>
    <property type="evidence" value="ECO:0000266"/>
    <property type="project" value="RGD"/>
</dbReference>
<dbReference type="FunFam" id="6.10.140.2220:FF:000014">
    <property type="entry name" value="Programmed cell death 2"/>
    <property type="match status" value="1"/>
</dbReference>
<dbReference type="Gene3D" id="6.10.140.2220">
    <property type="match status" value="1"/>
</dbReference>
<dbReference type="InterPro" id="IPR007320">
    <property type="entry name" value="PDCD2_C"/>
</dbReference>
<dbReference type="InterPro" id="IPR002893">
    <property type="entry name" value="Znf_MYND"/>
</dbReference>
<dbReference type="PANTHER" id="PTHR12298">
    <property type="entry name" value="PCDC2 PROGRAMMED CELL DEATH PROTEIN 2 -RELATED"/>
    <property type="match status" value="1"/>
</dbReference>
<dbReference type="PANTHER" id="PTHR12298:SF4">
    <property type="entry name" value="PROGRAMMED CELL DEATH PROTEIN 2"/>
    <property type="match status" value="1"/>
</dbReference>
<dbReference type="Pfam" id="PF04194">
    <property type="entry name" value="PDCD2_C"/>
    <property type="match status" value="1"/>
</dbReference>
<dbReference type="Pfam" id="PF01753">
    <property type="entry name" value="zf-MYND"/>
    <property type="match status" value="1"/>
</dbReference>
<dbReference type="SUPFAM" id="SSF144232">
    <property type="entry name" value="HIT/MYND zinc finger-like"/>
    <property type="match status" value="1"/>
</dbReference>
<dbReference type="PROSITE" id="PS01360">
    <property type="entry name" value="ZF_MYND_1"/>
    <property type="match status" value="1"/>
</dbReference>
<dbReference type="PROSITE" id="PS50865">
    <property type="entry name" value="ZF_MYND_2"/>
    <property type="match status" value="1"/>
</dbReference>
<accession>P47816</accession>
<accession>G3V666</accession>
<reference key="1">
    <citation type="journal article" date="2004" name="Nature">
        <title>Genome sequence of the Brown Norway rat yields insights into mammalian evolution.</title>
        <authorList>
            <person name="Gibbs R.A."/>
            <person name="Weinstock G.M."/>
            <person name="Metzker M.L."/>
            <person name="Muzny D.M."/>
            <person name="Sodergren E.J."/>
            <person name="Scherer S."/>
            <person name="Scott G."/>
            <person name="Steffen D."/>
            <person name="Worley K.C."/>
            <person name="Burch P.E."/>
            <person name="Okwuonu G."/>
            <person name="Hines S."/>
            <person name="Lewis L."/>
            <person name="Deramo C."/>
            <person name="Delgado O."/>
            <person name="Dugan-Rocha S."/>
            <person name="Miner G."/>
            <person name="Morgan M."/>
            <person name="Hawes A."/>
            <person name="Gill R."/>
            <person name="Holt R.A."/>
            <person name="Adams M.D."/>
            <person name="Amanatides P.G."/>
            <person name="Baden-Tillson H."/>
            <person name="Barnstead M."/>
            <person name="Chin S."/>
            <person name="Evans C.A."/>
            <person name="Ferriera S."/>
            <person name="Fosler C."/>
            <person name="Glodek A."/>
            <person name="Gu Z."/>
            <person name="Jennings D."/>
            <person name="Kraft C.L."/>
            <person name="Nguyen T."/>
            <person name="Pfannkoch C.M."/>
            <person name="Sitter C."/>
            <person name="Sutton G.G."/>
            <person name="Venter J.C."/>
            <person name="Woodage T."/>
            <person name="Smith D."/>
            <person name="Lee H.-M."/>
            <person name="Gustafson E."/>
            <person name="Cahill P."/>
            <person name="Kana A."/>
            <person name="Doucette-Stamm L."/>
            <person name="Weinstock K."/>
            <person name="Fechtel K."/>
            <person name="Weiss R.B."/>
            <person name="Dunn D.M."/>
            <person name="Green E.D."/>
            <person name="Blakesley R.W."/>
            <person name="Bouffard G.G."/>
            <person name="De Jong P.J."/>
            <person name="Osoegawa K."/>
            <person name="Zhu B."/>
            <person name="Marra M."/>
            <person name="Schein J."/>
            <person name="Bosdet I."/>
            <person name="Fjell C."/>
            <person name="Jones S."/>
            <person name="Krzywinski M."/>
            <person name="Mathewson C."/>
            <person name="Siddiqui A."/>
            <person name="Wye N."/>
            <person name="McPherson J."/>
            <person name="Zhao S."/>
            <person name="Fraser C.M."/>
            <person name="Shetty J."/>
            <person name="Shatsman S."/>
            <person name="Geer K."/>
            <person name="Chen Y."/>
            <person name="Abramzon S."/>
            <person name="Nierman W.C."/>
            <person name="Havlak P.H."/>
            <person name="Chen R."/>
            <person name="Durbin K.J."/>
            <person name="Egan A."/>
            <person name="Ren Y."/>
            <person name="Song X.-Z."/>
            <person name="Li B."/>
            <person name="Liu Y."/>
            <person name="Qin X."/>
            <person name="Cawley S."/>
            <person name="Cooney A.J."/>
            <person name="D'Souza L.M."/>
            <person name="Martin K."/>
            <person name="Wu J.Q."/>
            <person name="Gonzalez-Garay M.L."/>
            <person name="Jackson A.R."/>
            <person name="Kalafus K.J."/>
            <person name="McLeod M.P."/>
            <person name="Milosavljevic A."/>
            <person name="Virk D."/>
            <person name="Volkov A."/>
            <person name="Wheeler D.A."/>
            <person name="Zhang Z."/>
            <person name="Bailey J.A."/>
            <person name="Eichler E.E."/>
            <person name="Tuzun E."/>
            <person name="Birney E."/>
            <person name="Mongin E."/>
            <person name="Ureta-Vidal A."/>
            <person name="Woodwark C."/>
            <person name="Zdobnov E."/>
            <person name="Bork P."/>
            <person name="Suyama M."/>
            <person name="Torrents D."/>
            <person name="Alexandersson M."/>
            <person name="Trask B.J."/>
            <person name="Young J.M."/>
            <person name="Huang H."/>
            <person name="Wang H."/>
            <person name="Xing H."/>
            <person name="Daniels S."/>
            <person name="Gietzen D."/>
            <person name="Schmidt J."/>
            <person name="Stevens K."/>
            <person name="Vitt U."/>
            <person name="Wingrove J."/>
            <person name="Camara F."/>
            <person name="Mar Alba M."/>
            <person name="Abril J.F."/>
            <person name="Guigo R."/>
            <person name="Smit A."/>
            <person name="Dubchak I."/>
            <person name="Rubin E.M."/>
            <person name="Couronne O."/>
            <person name="Poliakov A."/>
            <person name="Huebner N."/>
            <person name="Ganten D."/>
            <person name="Goesele C."/>
            <person name="Hummel O."/>
            <person name="Kreitler T."/>
            <person name="Lee Y.-A."/>
            <person name="Monti J."/>
            <person name="Schulz H."/>
            <person name="Zimdahl H."/>
            <person name="Himmelbauer H."/>
            <person name="Lehrach H."/>
            <person name="Jacob H.J."/>
            <person name="Bromberg S."/>
            <person name="Gullings-Handley J."/>
            <person name="Jensen-Seaman M.I."/>
            <person name="Kwitek A.E."/>
            <person name="Lazar J."/>
            <person name="Pasko D."/>
            <person name="Tonellato P.J."/>
            <person name="Twigger S."/>
            <person name="Ponting C.P."/>
            <person name="Duarte J.M."/>
            <person name="Rice S."/>
            <person name="Goodstadt L."/>
            <person name="Beatson S.A."/>
            <person name="Emes R.D."/>
            <person name="Winter E.E."/>
            <person name="Webber C."/>
            <person name="Brandt P."/>
            <person name="Nyakatura G."/>
            <person name="Adetobi M."/>
            <person name="Chiaromonte F."/>
            <person name="Elnitski L."/>
            <person name="Eswara P."/>
            <person name="Hardison R.C."/>
            <person name="Hou M."/>
            <person name="Kolbe D."/>
            <person name="Makova K."/>
            <person name="Miller W."/>
            <person name="Nekrutenko A."/>
            <person name="Riemer C."/>
            <person name="Schwartz S."/>
            <person name="Taylor J."/>
            <person name="Yang S."/>
            <person name="Zhang Y."/>
            <person name="Lindpaintner K."/>
            <person name="Andrews T.D."/>
            <person name="Caccamo M."/>
            <person name="Clamp M."/>
            <person name="Clarke L."/>
            <person name="Curwen V."/>
            <person name="Durbin R.M."/>
            <person name="Eyras E."/>
            <person name="Searle S.M."/>
            <person name="Cooper G.M."/>
            <person name="Batzoglou S."/>
            <person name="Brudno M."/>
            <person name="Sidow A."/>
            <person name="Stone E.A."/>
            <person name="Payseur B.A."/>
            <person name="Bourque G."/>
            <person name="Lopez-Otin C."/>
            <person name="Puente X.S."/>
            <person name="Chakrabarti K."/>
            <person name="Chatterji S."/>
            <person name="Dewey C."/>
            <person name="Pachter L."/>
            <person name="Bray N."/>
            <person name="Yap V.B."/>
            <person name="Caspi A."/>
            <person name="Tesler G."/>
            <person name="Pevzner P.A."/>
            <person name="Haussler D."/>
            <person name="Roskin K.M."/>
            <person name="Baertsch R."/>
            <person name="Clawson H."/>
            <person name="Furey T.S."/>
            <person name="Hinrichs A.S."/>
            <person name="Karolchik D."/>
            <person name="Kent W.J."/>
            <person name="Rosenbloom K.R."/>
            <person name="Trumbower H."/>
            <person name="Weirauch M."/>
            <person name="Cooper D.N."/>
            <person name="Stenson P.D."/>
            <person name="Ma B."/>
            <person name="Brent M."/>
            <person name="Arumugam M."/>
            <person name="Shteynberg D."/>
            <person name="Copley R.R."/>
            <person name="Taylor M.S."/>
            <person name="Riethman H."/>
            <person name="Mudunuri U."/>
            <person name="Peterson J."/>
            <person name="Guyer M."/>
            <person name="Felsenfeld A."/>
            <person name="Old S."/>
            <person name="Mockrin S."/>
            <person name="Collins F.S."/>
        </authorList>
    </citation>
    <scope>NUCLEOTIDE SEQUENCE [LARGE SCALE GENOMIC DNA]</scope>
    <source>
        <strain>Brown Norway</strain>
    </source>
</reference>
<reference key="2">
    <citation type="submission" date="2005-09" db="EMBL/GenBank/DDBJ databases">
        <authorList>
            <person name="Mural R.J."/>
            <person name="Adams M.D."/>
            <person name="Myers E.W."/>
            <person name="Smith H.O."/>
            <person name="Venter J.C."/>
        </authorList>
    </citation>
    <scope>NUCLEOTIDE SEQUENCE [LARGE SCALE GENOMIC DNA]</scope>
    <source>
        <strain>Brown Norway</strain>
    </source>
</reference>
<reference key="3">
    <citation type="journal article" date="1991" name="Mol. Cell. Biol.">
        <title>Identification of mRNAs associated with programmed cell death in immature thymocytes.</title>
        <authorList>
            <person name="Owens G.P."/>
            <person name="Hahn W.E."/>
            <person name="Cohen J.J."/>
        </authorList>
    </citation>
    <scope>NUCLEOTIDE SEQUENCE [MRNA] OF 57-343</scope>
    <source>
        <strain>Sprague-Dawley</strain>
        <tissue>Thymus</tissue>
    </source>
</reference>
<evidence type="ECO:0000250" key="1"/>
<evidence type="ECO:0000255" key="2">
    <source>
        <dbReference type="PROSITE-ProRule" id="PRU00134"/>
    </source>
</evidence>
<evidence type="ECO:0000305" key="3"/>
<protein>
    <recommendedName>
        <fullName>Programmed cell death protein 2</fullName>
    </recommendedName>
    <alternativeName>
        <fullName>Zinc finger protein Rp-8</fullName>
    </alternativeName>
</protein>
<proteinExistence type="evidence at transcript level"/>
<name>PDCD2_RAT</name>
<sequence length="343" mass="38444">MAAVVPVTVELGFVEEAPAWRLRSEQFPSKVGGRPAWLALAELPGPGALACARCGRPLAFLLQVYAPLPGRDEAFHRSLFLFCCREPLCCAGLRVFRNQLPRKNAFYSYEPPSETGASDTECVCLQLKSGAHLCRVCGCLAPMTCSRCKQAHYCSKEHQTLDWQLGHKQACTQSDHLDHMVPDHNFLFPEFEIVTETEDEIGPEVVEMEDYSEVIGSMEGVPEEELDSMAKHESKEDHIFQKFKSKIALEPEQILRYGRGIKPIWISGENIPQEKDIPDCSCGAKRIFEFQVMPQLLNHLKADRLGTSVDWGILAVFTCAESCSLGIGYTEEFVWKQDVTETP</sequence>
<comment type="function">
    <text>May be a DNA-binding protein with a regulatory function. May play an important role in cell death and/or in regulation of cell proliferation.</text>
</comment>
<comment type="subcellular location">
    <subcellularLocation>
        <location evidence="3">Nucleus</location>
    </subcellularLocation>
</comment>
<comment type="developmental stage">
    <text>Expressed during apoptosis.</text>
</comment>
<comment type="induction">
    <text>By irradiation and dexamethasone.</text>
</comment>
<comment type="PTM">
    <text evidence="1">Ubiquitinated by PRKN, promoting proteasomal degradation.</text>
</comment>
<gene>
    <name type="primary">Pdcd2</name>
    <name type="synonym">Rp8</name>
</gene>
<feature type="chain" id="PRO_0000218306" description="Programmed cell death protein 2">
    <location>
        <begin position="1"/>
        <end position="343"/>
    </location>
</feature>
<feature type="zinc finger region" description="MYND-type; atypical" evidence="2">
    <location>
        <begin position="134"/>
        <end position="171"/>
    </location>
</feature>
<feature type="binding site" evidence="2">
    <location>
        <position position="134"/>
    </location>
    <ligand>
        <name>Zn(2+)</name>
        <dbReference type="ChEBI" id="CHEBI:29105"/>
        <label>1</label>
    </ligand>
</feature>
<feature type="binding site" evidence="2">
    <location>
        <position position="137"/>
    </location>
    <ligand>
        <name>Zn(2+)</name>
        <dbReference type="ChEBI" id="CHEBI:29105"/>
        <label>1</label>
    </ligand>
</feature>
<feature type="binding site" evidence="2">
    <location>
        <position position="145"/>
    </location>
    <ligand>
        <name>Zn(2+)</name>
        <dbReference type="ChEBI" id="CHEBI:29105"/>
        <label>2</label>
    </ligand>
</feature>
<feature type="binding site" evidence="2">
    <location>
        <position position="148"/>
    </location>
    <ligand>
        <name>Zn(2+)</name>
        <dbReference type="ChEBI" id="CHEBI:29105"/>
        <label>2</label>
    </ligand>
</feature>
<feature type="binding site" evidence="2">
    <location>
        <position position="154"/>
    </location>
    <ligand>
        <name>Zn(2+)</name>
        <dbReference type="ChEBI" id="CHEBI:29105"/>
        <label>1</label>
    </ligand>
</feature>
<feature type="binding site" evidence="2">
    <location>
        <position position="158"/>
    </location>
    <ligand>
        <name>Zn(2+)</name>
        <dbReference type="ChEBI" id="CHEBI:29105"/>
        <label>1</label>
    </ligand>
</feature>
<feature type="binding site" evidence="2">
    <location>
        <position position="167"/>
    </location>
    <ligand>
        <name>Zn(2+)</name>
        <dbReference type="ChEBI" id="CHEBI:29105"/>
        <label>2</label>
    </ligand>
</feature>
<feature type="binding site" evidence="2">
    <location>
        <position position="171"/>
    </location>
    <ligand>
        <name>Zn(2+)</name>
        <dbReference type="ChEBI" id="CHEBI:29105"/>
        <label>2</label>
    </ligand>
</feature>
<feature type="sequence conflict" description="In Ref. 3; AAA42067." evidence="3" ref="3">
    <original>E</original>
    <variation>D</variation>
    <location>
        <position position="73"/>
    </location>
</feature>
<feature type="sequence conflict" description="In Ref. 3; AAA42067." evidence="3" ref="3">
    <original>F</original>
    <variation>L</variation>
    <location>
        <position position="186"/>
    </location>
</feature>
<feature type="sequence conflict" description="In Ref. 3; AAA42067." evidence="3" ref="3">
    <original>A</original>
    <variation>V</variation>
    <location>
        <position position="284"/>
    </location>
</feature>
<feature type="sequence conflict" description="In Ref. 3; AAA42067." evidence="3" ref="3">
    <original>Y</original>
    <variation>F</variation>
    <location>
        <position position="329"/>
    </location>
</feature>
<organism>
    <name type="scientific">Rattus norvegicus</name>
    <name type="common">Rat</name>
    <dbReference type="NCBI Taxonomy" id="10116"/>
    <lineage>
        <taxon>Eukaryota</taxon>
        <taxon>Metazoa</taxon>
        <taxon>Chordata</taxon>
        <taxon>Craniata</taxon>
        <taxon>Vertebrata</taxon>
        <taxon>Euteleostomi</taxon>
        <taxon>Mammalia</taxon>
        <taxon>Eutheria</taxon>
        <taxon>Euarchontoglires</taxon>
        <taxon>Glires</taxon>
        <taxon>Rodentia</taxon>
        <taxon>Myomorpha</taxon>
        <taxon>Muroidea</taxon>
        <taxon>Muridae</taxon>
        <taxon>Murinae</taxon>
        <taxon>Rattus</taxon>
    </lineage>
</organism>
<keyword id="KW-0053">Apoptosis</keyword>
<keyword id="KW-0238">DNA-binding</keyword>
<keyword id="KW-0479">Metal-binding</keyword>
<keyword id="KW-0539">Nucleus</keyword>
<keyword id="KW-1185">Reference proteome</keyword>
<keyword id="KW-0832">Ubl conjugation</keyword>
<keyword id="KW-0862">Zinc</keyword>
<keyword id="KW-0863">Zinc-finger</keyword>